<gene>
    <name evidence="11" type="primary">FRI</name>
</gene>
<dbReference type="EMBL" id="AF228500">
    <property type="protein sequence ID" value="AAG23415.1"/>
    <property type="molecule type" value="mRNA"/>
</dbReference>
<dbReference type="EMBL" id="AF228499">
    <property type="protein sequence ID" value="AAG23414.1"/>
    <property type="molecule type" value="Genomic_DNA"/>
</dbReference>
<dbReference type="SMR" id="P0DH90"/>
<dbReference type="PhylomeDB" id="P0DH90"/>
<dbReference type="ExpressionAtlas" id="P0DH90">
    <property type="expression patterns" value="baseline and differential"/>
</dbReference>
<dbReference type="GO" id="GO:0016607">
    <property type="term" value="C:nuclear speck"/>
    <property type="evidence" value="ECO:0007669"/>
    <property type="project" value="UniProtKB-SubCell"/>
</dbReference>
<dbReference type="GO" id="GO:0030154">
    <property type="term" value="P:cell differentiation"/>
    <property type="evidence" value="ECO:0007669"/>
    <property type="project" value="UniProtKB-KW"/>
</dbReference>
<dbReference type="GO" id="GO:0009908">
    <property type="term" value="P:flower development"/>
    <property type="evidence" value="ECO:0007669"/>
    <property type="project" value="UniProtKB-KW"/>
</dbReference>
<dbReference type="InterPro" id="IPR012474">
    <property type="entry name" value="Frigida"/>
</dbReference>
<dbReference type="PANTHER" id="PTHR31791">
    <property type="entry name" value="FRIGIDA-LIKE PROTEIN 3-RELATED"/>
    <property type="match status" value="1"/>
</dbReference>
<dbReference type="PANTHER" id="PTHR31791:SF49">
    <property type="entry name" value="INACTIVE PROTEIN FRIGIDA"/>
    <property type="match status" value="1"/>
</dbReference>
<dbReference type="Pfam" id="PF07899">
    <property type="entry name" value="Frigida"/>
    <property type="match status" value="1"/>
</dbReference>
<name>FRIGI_ARATH</name>
<evidence type="ECO:0000255" key="1"/>
<evidence type="ECO:0000256" key="2">
    <source>
        <dbReference type="SAM" id="MobiDB-lite"/>
    </source>
</evidence>
<evidence type="ECO:0000269" key="3">
    <source>
    </source>
</evidence>
<evidence type="ECO:0000269" key="4">
    <source>
    </source>
</evidence>
<evidence type="ECO:0000269" key="5">
    <source>
    </source>
</evidence>
<evidence type="ECO:0000269" key="6">
    <source>
    </source>
</evidence>
<evidence type="ECO:0000269" key="7">
    <source>
    </source>
</evidence>
<evidence type="ECO:0000269" key="8">
    <source>
    </source>
</evidence>
<evidence type="ECO:0000269" key="9">
    <source>
    </source>
</evidence>
<evidence type="ECO:0000269" key="10">
    <source>
    </source>
</evidence>
<evidence type="ECO:0000303" key="11">
    <source>
    </source>
</evidence>
<evidence type="ECO:0000305" key="12"/>
<comment type="function">
    <text evidence="4 6 8 10">Required for the regulation of flowering time in the late-flowering phenotype. Involved in the enrichment of a WDR5A-containing COMPASS-like complex at the 'FLOWERING LOCUS C' that trimethylates histone H3 'Lys-4', leading to FLC up-regulation and RNA levels increase (PubMed:19567704). Variants with an early-flowering phenotype (Including cv. Columbia, cv. Landsberg Erecta and cv. Wassilewskija) show loss-of-function mutations of FRI. Able to delay flowering independently of FRL1 activity. Dispensable for the reactivation of FLC in early embryogenesis, but required to maintain high levels of FLC expression in later embryonic and vegetative development. Suppresses the repression of FLC by the autonomous pathway, but has no effect on the expression of the genes involved in this pathway.</text>
</comment>
<comment type="subunit">
    <text evidence="5 7 9 10">Homodimer. Component of the transcription activator complex FRI-C composed of FRI, FRL1, SUF4, FLX and FES1. Interacts (via N-terminus) with FRL1 and (via C-terminus) with FLX (via N-terminus), SUF4 (via C-terminus) and FES1 (via C-terminus). Interacts with ASHH2 and RIN1, a component of the SWR1 chromatin-remodeling complex (PubMed:17138694, PubMed:20711170, PubMed:21282526). Interacts with CBP20, FIP1 and FIP2 (PubMed:19429606).</text>
</comment>
<comment type="subcellular location">
    <subcellularLocation>
        <location evidence="5">Nucleus speckle</location>
    </subcellularLocation>
</comment>
<comment type="tissue specificity">
    <text evidence="6">Expressed in ovules, but not in stamens.</text>
</comment>
<comment type="induction">
    <text evidence="6">Not regulated by vernalization.</text>
</comment>
<comment type="similarity">
    <text evidence="12">Belongs to the Frigida family.</text>
</comment>
<comment type="caution">
    <text evidence="12">Has been shown to be inactive in cv. Columbia (AC Q67Z93), cv. Landsberg Erecta and cv. Wassilewskija due to loss-of-function mutations. The sequence shown is from strain cv. H51.</text>
</comment>
<organism>
    <name type="scientific">Arabidopsis thaliana</name>
    <name type="common">Mouse-ear cress</name>
    <dbReference type="NCBI Taxonomy" id="3702"/>
    <lineage>
        <taxon>Eukaryota</taxon>
        <taxon>Viridiplantae</taxon>
        <taxon>Streptophyta</taxon>
        <taxon>Embryophyta</taxon>
        <taxon>Tracheophyta</taxon>
        <taxon>Spermatophyta</taxon>
        <taxon>Magnoliopsida</taxon>
        <taxon>eudicotyledons</taxon>
        <taxon>Gunneridae</taxon>
        <taxon>Pentapetalae</taxon>
        <taxon>rosids</taxon>
        <taxon>malvids</taxon>
        <taxon>Brassicales</taxon>
        <taxon>Brassicaceae</taxon>
        <taxon>Camelineae</taxon>
        <taxon>Arabidopsis</taxon>
    </lineage>
</organism>
<accession>P0DH90</accession>
<accession>O65274</accession>
<accession>Q9FDW0</accession>
<keyword id="KW-0175">Coiled coil</keyword>
<keyword id="KW-0217">Developmental protein</keyword>
<keyword id="KW-0221">Differentiation</keyword>
<keyword id="KW-0287">Flowering</keyword>
<keyword id="KW-0539">Nucleus</keyword>
<sequence length="609" mass="68443">MSNYPPTVAAQPTTTANPLLQRHQSEQRRRELPKIVETESTSMDITIGQSKQPQFLKSIDELAAFSVAVETFKRQFDDLQKHIESIENAIDSKLESNGVVLAARNNNFHQPMLSPPRNNVSVETTVTVSQPSQEIVPETSNKPEGGRMCELMCSKGLRKYIYANISDQAKLMEEIPSALKLAKEPAKFVLDCIGKFYLQGRRAFTKESPMSSARQVSLLILESFLLMPDRGKGKVKIESWIKDEAETAAVAWRKRLMTEGGLAAAEKMDARGLLLLVACFGVPSNFRSTDLLDLIRMSGSNEIAGALKRSQFLVPMVSGIVESSIKRGMHIEALEMVYTFGMEDKFSAALVLTSFLKMSKESFERAKRKAQSPLAFKEAATKQLAVLSSVMQCMETHKLDPAKELPGWQIKEQIVSLEKDTLQLDKEMEEKARSLSLMEEAALAKRMYNQQIKRPRLSPMEMPPVTSSSYSPIYRDRSFPSQRDDDQDEISALVSSYLGPSTSFPHRSRRSPEYMVPLPHGGLGRSVYAYEHLAPNSYSPGHGHRLHRQYSPSLVHGQRHPLQYSPPIHGQQQLPYGIQRVYRHSPSEERYLGLSNQRSPRSNSSLDPK</sequence>
<protein>
    <recommendedName>
        <fullName evidence="11">Protein FRIGIDA</fullName>
    </recommendedName>
</protein>
<proteinExistence type="evidence at protein level"/>
<reference key="1">
    <citation type="journal article" date="2000" name="Science">
        <title>Molecular analysis of FRIGIDA, a major determinant of natural variation in Arabidopsis flowering time.</title>
        <authorList>
            <person name="Johanson U."/>
            <person name="West J."/>
            <person name="Lister C."/>
            <person name="Michaels S."/>
            <person name="Amasino R.M."/>
            <person name="Dean C."/>
        </authorList>
    </citation>
    <scope>NUCLEOTIDE SEQUENCE [GENOMIC DNA / MRNA]</scope>
    <scope>VARIANTS ILE-55; ILE-79; GLU-146 AND ILE-148</scope>
    <source>
        <strain>cv. Edi-0</strain>
        <strain>cv. H51</strain>
        <strain>cv. Sf-2</strain>
        <strain>cv. Sha</strain>
    </source>
</reference>
<reference key="2">
    <citation type="journal article" date="2004" name="Proc. Natl. Acad. Sci. U.S.A.">
        <title>FRIGIDA-related genes are required for the winter-annual habit in Arabidopsis.</title>
        <authorList>
            <person name="Michaels S.D."/>
            <person name="Bezerra I.C."/>
            <person name="Amasino R.M."/>
        </authorList>
    </citation>
    <scope>FUNCTION</scope>
    <scope>GENE FAMILY</scope>
</reference>
<reference key="3">
    <citation type="journal article" date="2006" name="Plant Cell">
        <title>SUPPRESSOR OF FRIGIDA4, encoding a C2H2-Type zinc finger protein, represses flowering by transcriptional activation of Arabidopsis FLOWERING LOCUS C.</title>
        <authorList>
            <person name="Kim S."/>
            <person name="Choi K."/>
            <person name="Park C."/>
            <person name="Hwang H.J."/>
            <person name="Lee I."/>
        </authorList>
    </citation>
    <scope>SUBCELLULAR LOCATION</scope>
    <scope>INTERACTION WITH SUF4</scope>
    <scope>SUBUNIT</scope>
</reference>
<reference key="4">
    <citation type="journal article" date="2009" name="Plant Cell">
        <title>Establishment of the winter-annual growth habit via FRIGIDA-mediated histone methylation at FLOWERING LOCUS C in Arabidopsis.</title>
        <authorList>
            <person name="Jiang D."/>
            <person name="Gu X."/>
            <person name="He Y."/>
        </authorList>
    </citation>
    <scope>FUNCTION</scope>
</reference>
<reference key="5">
    <citation type="journal article" date="2009" name="Plant J.">
        <title>Resetting and regulation of Flowering Locus C expression during Arabidopsis reproductive development.</title>
        <authorList>
            <person name="Choi J."/>
            <person name="Hyun Y."/>
            <person name="Kang M.J."/>
            <person name="In Yun H."/>
            <person name="Yun J.Y."/>
            <person name="Lister C."/>
            <person name="Dean C."/>
            <person name="Amasino R.M."/>
            <person name="Noh B."/>
            <person name="Noh Y.S."/>
            <person name="Choi Y."/>
        </authorList>
    </citation>
    <scope>FUNCTION</scope>
    <scope>INDUCTION BY VERNALIZATION</scope>
    <scope>TISSUE SPECIFICITY</scope>
</reference>
<reference key="6">
    <citation type="journal article" date="2009" name="Plant Physiol.">
        <title>FRIGIDA delays flowering in Arabidopsis via a cotranscriptional mechanism involving direct interaction with the nuclear cap-binding complex.</title>
        <authorList>
            <person name="Geraldo N."/>
            <person name="Baeurle I."/>
            <person name="Kidou S."/>
            <person name="Hu X."/>
            <person name="Dean C."/>
        </authorList>
    </citation>
    <scope>INTERACTION WITH CBP20; FIP1 AND FIP2</scope>
</reference>
<reference key="7">
    <citation type="journal article" date="2010" name="EMBO J.">
        <title>Growth habit determination by the balance of histone methylation activities in Arabidopsis.</title>
        <authorList>
            <person name="Ko J.H."/>
            <person name="Mitina I."/>
            <person name="Tamada Y."/>
            <person name="Hyun Y."/>
            <person name="Choi Y."/>
            <person name="Amasino R.M."/>
            <person name="Noh B."/>
            <person name="Noh Y.S."/>
        </authorList>
    </citation>
    <scope>INTERACTION WITH ASHH2</scope>
</reference>
<reference key="8">
    <citation type="journal article" date="2011" name="Plant Cell">
        <title>The FRIGIDA complex activates transcription of FLC, a strong flowering repressor in Arabidopsis, by recruiting chromatin modification factors.</title>
        <authorList>
            <person name="Choi K."/>
            <person name="Kim J."/>
            <person name="Hwang H.J."/>
            <person name="Kim S."/>
            <person name="Park C."/>
            <person name="Kim S.Y."/>
            <person name="Lee I."/>
        </authorList>
    </citation>
    <scope>FUNCTION</scope>
    <scope>IDENTIFICATION BY MASS SPECTROMETRY IN THE FRI-C COMPLEX</scope>
    <scope>INTERACTION WITH RIN1; FLX; SUF4; FRL1 AND FES1</scope>
</reference>
<feature type="chain" id="PRO_0000087336" description="Protein FRIGIDA">
    <location>
        <begin position="1"/>
        <end position="609"/>
    </location>
</feature>
<feature type="region of interest" description="Disordered" evidence="2">
    <location>
        <begin position="1"/>
        <end position="31"/>
    </location>
</feature>
<feature type="region of interest" description="Disordered" evidence="2">
    <location>
        <begin position="454"/>
        <end position="488"/>
    </location>
</feature>
<feature type="region of interest" description="Disordered" evidence="2">
    <location>
        <begin position="587"/>
        <end position="609"/>
    </location>
</feature>
<feature type="coiled-coil region" evidence="1">
    <location>
        <begin position="60"/>
        <end position="97"/>
    </location>
</feature>
<feature type="coiled-coil region" evidence="1">
    <location>
        <begin position="409"/>
        <end position="440"/>
    </location>
</feature>
<feature type="compositionally biased region" description="Low complexity" evidence="2">
    <location>
        <begin position="1"/>
        <end position="18"/>
    </location>
</feature>
<feature type="compositionally biased region" description="Basic and acidic residues" evidence="2">
    <location>
        <begin position="474"/>
        <end position="484"/>
    </location>
</feature>
<feature type="compositionally biased region" description="Polar residues" evidence="2">
    <location>
        <begin position="594"/>
        <end position="609"/>
    </location>
</feature>
<feature type="sequence variant" description="In strain: cv. Sha." evidence="3">
    <original>F</original>
    <variation>I</variation>
    <location>
        <position position="55"/>
    </location>
</feature>
<feature type="sequence variant" description="In strain: cv. SF-2." evidence="3">
    <original>L</original>
    <variation>I</variation>
    <location>
        <position position="79"/>
    </location>
</feature>
<feature type="sequence variant" description="In strain: cv. Edi-0." evidence="3">
    <original>G</original>
    <variation>E</variation>
    <location>
        <position position="146"/>
    </location>
</feature>
<feature type="sequence variant" description="In strain: cv. Edi-0." evidence="3">
    <original>M</original>
    <variation>I</variation>
    <location>
        <position position="148"/>
    </location>
</feature>